<accession>O00399</accession>
<accession>B2RAC1</accession>
<dbReference type="EMBL" id="D84145">
    <property type="protein sequence ID" value="BAA19984.1"/>
    <property type="molecule type" value="mRNA"/>
</dbReference>
<dbReference type="EMBL" id="CR456851">
    <property type="protein sequence ID" value="CAG33132.1"/>
    <property type="molecule type" value="mRNA"/>
</dbReference>
<dbReference type="EMBL" id="AK314128">
    <property type="protein sequence ID" value="BAG36818.1"/>
    <property type="molecule type" value="mRNA"/>
</dbReference>
<dbReference type="EMBL" id="CH471080">
    <property type="protein sequence ID" value="EAW63466.1"/>
    <property type="molecule type" value="Genomic_DNA"/>
</dbReference>
<dbReference type="EMBL" id="BC013175">
    <property type="protein sequence ID" value="AAH13175.1"/>
    <property type="molecule type" value="mRNA"/>
</dbReference>
<dbReference type="CCDS" id="CCDS6076.1"/>
<dbReference type="RefSeq" id="NP_006562.1">
    <property type="nucleotide sequence ID" value="NM_006571.4"/>
</dbReference>
<dbReference type="PDB" id="3TV0">
    <property type="method" value="X-ray"/>
    <property type="resolution" value="2.15 A"/>
    <property type="chains" value="A/B=1-190"/>
</dbReference>
<dbReference type="PDBsum" id="3TV0"/>
<dbReference type="SMR" id="O00399"/>
<dbReference type="BioGRID" id="115913">
    <property type="interactions" value="81"/>
</dbReference>
<dbReference type="FunCoup" id="O00399">
    <property type="interactions" value="1133"/>
</dbReference>
<dbReference type="IntAct" id="O00399">
    <property type="interactions" value="65"/>
</dbReference>
<dbReference type="MINT" id="O00399"/>
<dbReference type="STRING" id="9606.ENSP00000221114"/>
<dbReference type="iPTMnet" id="O00399"/>
<dbReference type="MetOSite" id="O00399"/>
<dbReference type="PhosphoSitePlus" id="O00399"/>
<dbReference type="BioMuta" id="DCTN6"/>
<dbReference type="jPOST" id="O00399"/>
<dbReference type="MassIVE" id="O00399"/>
<dbReference type="PaxDb" id="9606-ENSP00000221114"/>
<dbReference type="PeptideAtlas" id="O00399"/>
<dbReference type="ProteomicsDB" id="47865"/>
<dbReference type="Pumba" id="O00399"/>
<dbReference type="Antibodypedia" id="10535">
    <property type="antibodies" value="168 antibodies from 25 providers"/>
</dbReference>
<dbReference type="DNASU" id="10671"/>
<dbReference type="Ensembl" id="ENST00000221114.8">
    <property type="protein sequence ID" value="ENSP00000221114.3"/>
    <property type="gene ID" value="ENSG00000104671.8"/>
</dbReference>
<dbReference type="GeneID" id="10671"/>
<dbReference type="KEGG" id="hsa:10671"/>
<dbReference type="MANE-Select" id="ENST00000221114.8">
    <property type="protein sequence ID" value="ENSP00000221114.3"/>
    <property type="RefSeq nucleotide sequence ID" value="NM_006571.4"/>
    <property type="RefSeq protein sequence ID" value="NP_006562.1"/>
</dbReference>
<dbReference type="UCSC" id="uc003xhy.4">
    <property type="organism name" value="human"/>
</dbReference>
<dbReference type="AGR" id="HGNC:16964"/>
<dbReference type="CTD" id="10671"/>
<dbReference type="DisGeNET" id="10671"/>
<dbReference type="GeneCards" id="DCTN6"/>
<dbReference type="HGNC" id="HGNC:16964">
    <property type="gene designation" value="DCTN6"/>
</dbReference>
<dbReference type="HPA" id="ENSG00000104671">
    <property type="expression patterns" value="Low tissue specificity"/>
</dbReference>
<dbReference type="MIM" id="612963">
    <property type="type" value="gene"/>
</dbReference>
<dbReference type="neXtProt" id="NX_O00399"/>
<dbReference type="OpenTargets" id="ENSG00000104671"/>
<dbReference type="PharmGKB" id="PA134927975"/>
<dbReference type="VEuPathDB" id="HostDB:ENSG00000104671"/>
<dbReference type="eggNOG" id="KOG4042">
    <property type="taxonomic scope" value="Eukaryota"/>
</dbReference>
<dbReference type="GeneTree" id="ENSGT00390000017890"/>
<dbReference type="HOGENOM" id="CLU_085418_1_0_1"/>
<dbReference type="InParanoid" id="O00399"/>
<dbReference type="OMA" id="ITMQAET"/>
<dbReference type="OrthoDB" id="2355at2759"/>
<dbReference type="PAN-GO" id="O00399">
    <property type="GO annotations" value="3 GO annotations based on evolutionary models"/>
</dbReference>
<dbReference type="PhylomeDB" id="O00399"/>
<dbReference type="TreeFam" id="TF352888"/>
<dbReference type="PathwayCommons" id="O00399"/>
<dbReference type="Reactome" id="R-HSA-2132295">
    <property type="pathway name" value="MHC class II antigen presentation"/>
</dbReference>
<dbReference type="Reactome" id="R-HSA-3371497">
    <property type="pathway name" value="HSP90 chaperone cycle for steroid hormone receptors (SHR) in the presence of ligand"/>
</dbReference>
<dbReference type="Reactome" id="R-HSA-6807878">
    <property type="pathway name" value="COPI-mediated anterograde transport"/>
</dbReference>
<dbReference type="Reactome" id="R-HSA-6811436">
    <property type="pathway name" value="COPI-independent Golgi-to-ER retrograde traffic"/>
</dbReference>
<dbReference type="SignaLink" id="O00399"/>
<dbReference type="SIGNOR" id="O00399"/>
<dbReference type="BioGRID-ORCS" id="10671">
    <property type="hits" value="687 hits in 1160 CRISPR screens"/>
</dbReference>
<dbReference type="ChiTaRS" id="DCTN6">
    <property type="organism name" value="human"/>
</dbReference>
<dbReference type="EvolutionaryTrace" id="O00399"/>
<dbReference type="GenomeRNAi" id="10671"/>
<dbReference type="Pharos" id="O00399">
    <property type="development level" value="Tdark"/>
</dbReference>
<dbReference type="PRO" id="PR:O00399"/>
<dbReference type="Proteomes" id="UP000005640">
    <property type="component" value="Chromosome 8"/>
</dbReference>
<dbReference type="RNAct" id="O00399">
    <property type="molecule type" value="protein"/>
</dbReference>
<dbReference type="Bgee" id="ENSG00000104671">
    <property type="expression patterns" value="Expressed in myocardium and 215 other cell types or tissues"/>
</dbReference>
<dbReference type="ExpressionAtlas" id="O00399">
    <property type="expression patterns" value="baseline and differential"/>
</dbReference>
<dbReference type="GO" id="GO:0005813">
    <property type="term" value="C:centrosome"/>
    <property type="evidence" value="ECO:0000314"/>
    <property type="project" value="UniProtKB"/>
</dbReference>
<dbReference type="GO" id="GO:0005829">
    <property type="term" value="C:cytosol"/>
    <property type="evidence" value="ECO:0000304"/>
    <property type="project" value="Reactome"/>
</dbReference>
<dbReference type="GO" id="GO:0005869">
    <property type="term" value="C:dynactin complex"/>
    <property type="evidence" value="ECO:0000318"/>
    <property type="project" value="GO_Central"/>
</dbReference>
<dbReference type="GO" id="GO:0000776">
    <property type="term" value="C:kinetochore"/>
    <property type="evidence" value="ECO:0007669"/>
    <property type="project" value="UniProtKB-KW"/>
</dbReference>
<dbReference type="GO" id="GO:0070840">
    <property type="term" value="F:dynein complex binding"/>
    <property type="evidence" value="ECO:0000318"/>
    <property type="project" value="GO_Central"/>
</dbReference>
<dbReference type="GO" id="GO:0007052">
    <property type="term" value="P:mitotic spindle organization"/>
    <property type="evidence" value="ECO:0000318"/>
    <property type="project" value="GO_Central"/>
</dbReference>
<dbReference type="CDD" id="cd04646">
    <property type="entry name" value="LbH_Dynactin_6"/>
    <property type="match status" value="1"/>
</dbReference>
<dbReference type="FunFam" id="2.160.10.10:FF:000021">
    <property type="entry name" value="dynactin subunit 6"/>
    <property type="match status" value="1"/>
</dbReference>
<dbReference type="Gene3D" id="2.160.10.10">
    <property type="entry name" value="Hexapeptide repeat proteins"/>
    <property type="match status" value="1"/>
</dbReference>
<dbReference type="InterPro" id="IPR027777">
    <property type="entry name" value="DCTN6"/>
</dbReference>
<dbReference type="InterPro" id="IPR011004">
    <property type="entry name" value="Trimer_LpxA-like_sf"/>
</dbReference>
<dbReference type="PANTHER" id="PTHR13072">
    <property type="entry name" value="DYNACTIN 6"/>
    <property type="match status" value="1"/>
</dbReference>
<dbReference type="PANTHER" id="PTHR13072:SF0">
    <property type="entry name" value="DYNACTIN SUBUNIT 6"/>
    <property type="match status" value="1"/>
</dbReference>
<dbReference type="SUPFAM" id="SSF51161">
    <property type="entry name" value="Trimeric LpxA-like enzymes"/>
    <property type="match status" value="1"/>
</dbReference>
<evidence type="ECO:0000250" key="1">
    <source>
        <dbReference type="UniProtKB" id="D0G6S1"/>
    </source>
</evidence>
<evidence type="ECO:0000250" key="2">
    <source>
        <dbReference type="UniProtKB" id="Q9WUB4"/>
    </source>
</evidence>
<evidence type="ECO:0000269" key="3">
    <source>
    </source>
</evidence>
<evidence type="ECO:0000305" key="4"/>
<evidence type="ECO:0000312" key="5">
    <source>
        <dbReference type="HGNC" id="HGNC:16964"/>
    </source>
</evidence>
<evidence type="ECO:0007829" key="6">
    <source>
        <dbReference type="PDB" id="3TV0"/>
    </source>
</evidence>
<name>DCTN6_HUMAN</name>
<protein>
    <recommendedName>
        <fullName>Dynactin subunit 6</fullName>
    </recommendedName>
    <alternativeName>
        <fullName>Dynactin subunit p27</fullName>
    </alternativeName>
    <alternativeName>
        <fullName>Protein WS-3</fullName>
    </alternativeName>
</protein>
<proteinExistence type="evidence at protein level"/>
<gene>
    <name evidence="5" type="primary">DCTN6</name>
    <name type="synonym">WS3</name>
</gene>
<reference key="1">
    <citation type="journal article" date="1997" name="Gene">
        <title>Cloning and characterization of a novel gene, WS-3, in human chromosome 8p11-p12.</title>
        <authorList>
            <person name="Ichikawa K."/>
            <person name="Yamabe Y."/>
            <person name="Imamura O."/>
            <person name="Kuromitsu J."/>
            <person name="Sugawara K."/>
            <person name="Suzuki N."/>
            <person name="Shimamoto A."/>
            <person name="Matsumoto T."/>
            <person name="Tokutake Y."/>
            <person name="Kitao S."/>
            <person name="Kataoka H."/>
            <person name="Satoh M."/>
            <person name="Sugimoto M."/>
            <person name="Goto M."/>
            <person name="Sugawara M."/>
            <person name="Furuichi Y."/>
        </authorList>
    </citation>
    <scope>NUCLEOTIDE SEQUENCE [MRNA]</scope>
    <source>
        <tissue>Skin</tissue>
    </source>
</reference>
<reference key="2">
    <citation type="submission" date="2004-06" db="EMBL/GenBank/DDBJ databases">
        <title>Cloning of human full open reading frames in Gateway(TM) system entry vector (pDONR201).</title>
        <authorList>
            <person name="Ebert L."/>
            <person name="Schick M."/>
            <person name="Neubert P."/>
            <person name="Schatten R."/>
            <person name="Henze S."/>
            <person name="Korn B."/>
        </authorList>
    </citation>
    <scope>NUCLEOTIDE SEQUENCE [LARGE SCALE MRNA]</scope>
</reference>
<reference key="3">
    <citation type="journal article" date="2004" name="Nat. Genet.">
        <title>Complete sequencing and characterization of 21,243 full-length human cDNAs.</title>
        <authorList>
            <person name="Ota T."/>
            <person name="Suzuki Y."/>
            <person name="Nishikawa T."/>
            <person name="Otsuki T."/>
            <person name="Sugiyama T."/>
            <person name="Irie R."/>
            <person name="Wakamatsu A."/>
            <person name="Hayashi K."/>
            <person name="Sato H."/>
            <person name="Nagai K."/>
            <person name="Kimura K."/>
            <person name="Makita H."/>
            <person name="Sekine M."/>
            <person name="Obayashi M."/>
            <person name="Nishi T."/>
            <person name="Shibahara T."/>
            <person name="Tanaka T."/>
            <person name="Ishii S."/>
            <person name="Yamamoto J."/>
            <person name="Saito K."/>
            <person name="Kawai Y."/>
            <person name="Isono Y."/>
            <person name="Nakamura Y."/>
            <person name="Nagahari K."/>
            <person name="Murakami K."/>
            <person name="Yasuda T."/>
            <person name="Iwayanagi T."/>
            <person name="Wagatsuma M."/>
            <person name="Shiratori A."/>
            <person name="Sudo H."/>
            <person name="Hosoiri T."/>
            <person name="Kaku Y."/>
            <person name="Kodaira H."/>
            <person name="Kondo H."/>
            <person name="Sugawara M."/>
            <person name="Takahashi M."/>
            <person name="Kanda K."/>
            <person name="Yokoi T."/>
            <person name="Furuya T."/>
            <person name="Kikkawa E."/>
            <person name="Omura Y."/>
            <person name="Abe K."/>
            <person name="Kamihara K."/>
            <person name="Katsuta N."/>
            <person name="Sato K."/>
            <person name="Tanikawa M."/>
            <person name="Yamazaki M."/>
            <person name="Ninomiya K."/>
            <person name="Ishibashi T."/>
            <person name="Yamashita H."/>
            <person name="Murakawa K."/>
            <person name="Fujimori K."/>
            <person name="Tanai H."/>
            <person name="Kimata M."/>
            <person name="Watanabe M."/>
            <person name="Hiraoka S."/>
            <person name="Chiba Y."/>
            <person name="Ishida S."/>
            <person name="Ono Y."/>
            <person name="Takiguchi S."/>
            <person name="Watanabe S."/>
            <person name="Yosida M."/>
            <person name="Hotuta T."/>
            <person name="Kusano J."/>
            <person name="Kanehori K."/>
            <person name="Takahashi-Fujii A."/>
            <person name="Hara H."/>
            <person name="Tanase T.-O."/>
            <person name="Nomura Y."/>
            <person name="Togiya S."/>
            <person name="Komai F."/>
            <person name="Hara R."/>
            <person name="Takeuchi K."/>
            <person name="Arita M."/>
            <person name="Imose N."/>
            <person name="Musashino K."/>
            <person name="Yuuki H."/>
            <person name="Oshima A."/>
            <person name="Sasaki N."/>
            <person name="Aotsuka S."/>
            <person name="Yoshikawa Y."/>
            <person name="Matsunawa H."/>
            <person name="Ichihara T."/>
            <person name="Shiohata N."/>
            <person name="Sano S."/>
            <person name="Moriya S."/>
            <person name="Momiyama H."/>
            <person name="Satoh N."/>
            <person name="Takami S."/>
            <person name="Terashima Y."/>
            <person name="Suzuki O."/>
            <person name="Nakagawa S."/>
            <person name="Senoh A."/>
            <person name="Mizoguchi H."/>
            <person name="Goto Y."/>
            <person name="Shimizu F."/>
            <person name="Wakebe H."/>
            <person name="Hishigaki H."/>
            <person name="Watanabe T."/>
            <person name="Sugiyama A."/>
            <person name="Takemoto M."/>
            <person name="Kawakami B."/>
            <person name="Yamazaki M."/>
            <person name="Watanabe K."/>
            <person name="Kumagai A."/>
            <person name="Itakura S."/>
            <person name="Fukuzumi Y."/>
            <person name="Fujimori Y."/>
            <person name="Komiyama M."/>
            <person name="Tashiro H."/>
            <person name="Tanigami A."/>
            <person name="Fujiwara T."/>
            <person name="Ono T."/>
            <person name="Yamada K."/>
            <person name="Fujii Y."/>
            <person name="Ozaki K."/>
            <person name="Hirao M."/>
            <person name="Ohmori Y."/>
            <person name="Kawabata A."/>
            <person name="Hikiji T."/>
            <person name="Kobatake N."/>
            <person name="Inagaki H."/>
            <person name="Ikema Y."/>
            <person name="Okamoto S."/>
            <person name="Okitani R."/>
            <person name="Kawakami T."/>
            <person name="Noguchi S."/>
            <person name="Itoh T."/>
            <person name="Shigeta K."/>
            <person name="Senba T."/>
            <person name="Matsumura K."/>
            <person name="Nakajima Y."/>
            <person name="Mizuno T."/>
            <person name="Morinaga M."/>
            <person name="Sasaki M."/>
            <person name="Togashi T."/>
            <person name="Oyama M."/>
            <person name="Hata H."/>
            <person name="Watanabe M."/>
            <person name="Komatsu T."/>
            <person name="Mizushima-Sugano J."/>
            <person name="Satoh T."/>
            <person name="Shirai Y."/>
            <person name="Takahashi Y."/>
            <person name="Nakagawa K."/>
            <person name="Okumura K."/>
            <person name="Nagase T."/>
            <person name="Nomura N."/>
            <person name="Kikuchi H."/>
            <person name="Masuho Y."/>
            <person name="Yamashita R."/>
            <person name="Nakai K."/>
            <person name="Yada T."/>
            <person name="Nakamura Y."/>
            <person name="Ohara O."/>
            <person name="Isogai T."/>
            <person name="Sugano S."/>
        </authorList>
    </citation>
    <scope>NUCLEOTIDE SEQUENCE [LARGE SCALE MRNA]</scope>
    <source>
        <tissue>Substantia nigra</tissue>
    </source>
</reference>
<reference key="4">
    <citation type="submission" date="2005-09" db="EMBL/GenBank/DDBJ databases">
        <authorList>
            <person name="Mural R.J."/>
            <person name="Istrail S."/>
            <person name="Sutton G.G."/>
            <person name="Florea L."/>
            <person name="Halpern A.L."/>
            <person name="Mobarry C.M."/>
            <person name="Lippert R."/>
            <person name="Walenz B."/>
            <person name="Shatkay H."/>
            <person name="Dew I."/>
            <person name="Miller J.R."/>
            <person name="Flanigan M.J."/>
            <person name="Edwards N.J."/>
            <person name="Bolanos R."/>
            <person name="Fasulo D."/>
            <person name="Halldorsson B.V."/>
            <person name="Hannenhalli S."/>
            <person name="Turner R."/>
            <person name="Yooseph S."/>
            <person name="Lu F."/>
            <person name="Nusskern D.R."/>
            <person name="Shue B.C."/>
            <person name="Zheng X.H."/>
            <person name="Zhong F."/>
            <person name="Delcher A.L."/>
            <person name="Huson D.H."/>
            <person name="Kravitz S.A."/>
            <person name="Mouchard L."/>
            <person name="Reinert K."/>
            <person name="Remington K.A."/>
            <person name="Clark A.G."/>
            <person name="Waterman M.S."/>
            <person name="Eichler E.E."/>
            <person name="Adams M.D."/>
            <person name="Hunkapiller M.W."/>
            <person name="Myers E.W."/>
            <person name="Venter J.C."/>
        </authorList>
    </citation>
    <scope>NUCLEOTIDE SEQUENCE [LARGE SCALE GENOMIC DNA]</scope>
</reference>
<reference key="5">
    <citation type="journal article" date="2004" name="Genome Res.">
        <title>The status, quality, and expansion of the NIH full-length cDNA project: the Mammalian Gene Collection (MGC).</title>
        <authorList>
            <consortium name="The MGC Project Team"/>
        </authorList>
    </citation>
    <scope>NUCLEOTIDE SEQUENCE [LARGE SCALE MRNA]</scope>
    <source>
        <tissue>Skin</tissue>
    </source>
</reference>
<reference key="6">
    <citation type="journal article" date="2011" name="BMC Syst. Biol.">
        <title>Initial characterization of the human central proteome.</title>
        <authorList>
            <person name="Burkard T.R."/>
            <person name="Planyavsky M."/>
            <person name="Kaupe I."/>
            <person name="Breitwieser F.P."/>
            <person name="Buerckstuemmer T."/>
            <person name="Bennett K.L."/>
            <person name="Superti-Furga G."/>
            <person name="Colinge J."/>
        </authorList>
    </citation>
    <scope>IDENTIFICATION BY MASS SPECTROMETRY [LARGE SCALE ANALYSIS]</scope>
</reference>
<reference key="7">
    <citation type="journal article" date="2013" name="EMBO J.">
        <title>Dynactin helps target Polo-like kinase 1 to kinetochores via its left-handed beta-helical p27 subunit.</title>
        <authorList>
            <person name="Yeh T.Y."/>
            <person name="Kowalska A.K."/>
            <person name="Scipioni B.R."/>
            <person name="Cheong F.K."/>
            <person name="Zheng M."/>
            <person name="Derewenda U."/>
            <person name="Derewenda Z.S."/>
            <person name="Schroer T.A."/>
        </authorList>
    </citation>
    <scope>X-RAY CRYSTALLOGRAPHY (2.15 ANGSTROMS)</scope>
    <scope>SUBUNIT</scope>
    <scope>SUBCELLULAR LOCATION</scope>
    <scope>PHOSPHORYLATION AT THR-186</scope>
    <scope>INTERACTION WITH PLK1</scope>
</reference>
<comment type="function">
    <text evidence="3">Part of the dynactin complex that activates the molecular motor dynein for ultra-processive transport along microtubules.</text>
</comment>
<comment type="subunit">
    <text evidence="1 2 3">Subunit of dynactin, a multiprotein complex part of a tripartite complex with dynein and a adapter, such as BICDL1, BICD2 or HOOK3. The dynactin complex is built around ACTR1A/ACTB filament and consists of an actin-related filament composed of a shoulder domain, a pointed end and a barbed end (PubMed:23455152). Its length is defined by its flexible shoulder domain. The soulder is composed of 2 DCTN1 subunits, 4 DCTN2 and 2 DCTN3. The 4 DCNT2 (via N-terminus) bind the ACTR1A filament and act as molecular rulers to determine the length. The pointed end is important for binding dynein-dynactin cargo adapters. Consists of 4 subunits: ACTR10, DCNT4, DCTN5 and DCTN6. Within the complex DCTN6 forms a heterodimer with DCTN5 (PubMed:23455152). The barbed end is composed of a CAPZA1:CAPZB heterodimers, which binds ACTR1A/ACTB filament and dynactin and stabilizes dynactin (By similarity). Interacts with PLK1 (PubMed:23455152). Interacts with N4BP2L1 (By similarity).</text>
</comment>
<comment type="subcellular location">
    <subcellularLocation>
        <location evidence="1">Cytoplasm</location>
        <location evidence="1">Cytoskeleton</location>
    </subcellularLocation>
    <subcellularLocation>
        <location evidence="3">Chromosome</location>
        <location evidence="3">Centromere</location>
        <location evidence="3">Kinetochore</location>
    </subcellularLocation>
</comment>
<comment type="tissue specificity">
    <text>Ubiquitous.</text>
</comment>
<comment type="PTM">
    <text evidence="3">Phosphorylation at Thr-186 by CDK1 during mitotic prometaphase creates a binding site for PLK1 that facilitates its recruitment to kinetochores.</text>
</comment>
<comment type="similarity">
    <text evidence="4">Belongs to the dynactin subunits 5/6 family. Dynactin subunit 6 subfamily.</text>
</comment>
<organism>
    <name type="scientific">Homo sapiens</name>
    <name type="common">Human</name>
    <dbReference type="NCBI Taxonomy" id="9606"/>
    <lineage>
        <taxon>Eukaryota</taxon>
        <taxon>Metazoa</taxon>
        <taxon>Chordata</taxon>
        <taxon>Craniata</taxon>
        <taxon>Vertebrata</taxon>
        <taxon>Euteleostomi</taxon>
        <taxon>Mammalia</taxon>
        <taxon>Eutheria</taxon>
        <taxon>Euarchontoglires</taxon>
        <taxon>Primates</taxon>
        <taxon>Haplorrhini</taxon>
        <taxon>Catarrhini</taxon>
        <taxon>Hominidae</taxon>
        <taxon>Homo</taxon>
    </lineage>
</organism>
<sequence length="190" mass="20747">MAEKTQKSVKIAPGAVVCVESEIRGDVTIGPRTVIHPKARIIAEAGPIVIGEGNLIEEQALIINAYPDNITPDTEDPEPKPMIIGTNNVFEVGCYSQAMKMGDNNVIESKAYVGRNVILTSGCIIGACCNLNTFEVIPENTVIYGADCLRRVQTERPQPQTLQLDFLMKILPNYHHLKKTMKGSSTPVKN</sequence>
<feature type="chain" id="PRO_0000079830" description="Dynactin subunit 6">
    <location>
        <begin position="1"/>
        <end position="190"/>
    </location>
</feature>
<feature type="modified residue" description="Phosphothreonine; by CDK1" evidence="3">
    <location>
        <position position="186"/>
    </location>
</feature>
<feature type="strand" evidence="6">
    <location>
        <begin position="9"/>
        <end position="11"/>
    </location>
</feature>
<feature type="strand" evidence="6">
    <location>
        <begin position="21"/>
        <end position="29"/>
    </location>
</feature>
<feature type="strand" evidence="6">
    <location>
        <begin position="40"/>
        <end position="46"/>
    </location>
</feature>
<feature type="strand" evidence="6">
    <location>
        <begin position="48"/>
        <end position="50"/>
    </location>
</feature>
<feature type="strand" evidence="6">
    <location>
        <begin position="61"/>
        <end position="64"/>
    </location>
</feature>
<feature type="strand" evidence="6">
    <location>
        <begin position="82"/>
        <end position="84"/>
    </location>
</feature>
<feature type="strand" evidence="6">
    <location>
        <begin position="99"/>
        <end position="101"/>
    </location>
</feature>
<feature type="strand" evidence="6">
    <location>
        <begin position="117"/>
        <end position="119"/>
    </location>
</feature>
<feature type="strand" evidence="6">
    <location>
        <begin position="135"/>
        <end position="137"/>
    </location>
</feature>
<feature type="strand" evidence="6">
    <location>
        <begin position="141"/>
        <end position="145"/>
    </location>
</feature>
<feature type="strand" evidence="6">
    <location>
        <begin position="150"/>
        <end position="153"/>
    </location>
</feature>
<keyword id="KW-0002">3D-structure</keyword>
<keyword id="KW-0137">Centromere</keyword>
<keyword id="KW-0158">Chromosome</keyword>
<keyword id="KW-0963">Cytoplasm</keyword>
<keyword id="KW-0206">Cytoskeleton</keyword>
<keyword id="KW-0995">Kinetochore</keyword>
<keyword id="KW-0597">Phosphoprotein</keyword>
<keyword id="KW-1267">Proteomics identification</keyword>
<keyword id="KW-1185">Reference proteome</keyword>